<accession>Q1CCX8</accession>
<accession>D1Q2I6</accession>
<comment type="similarity">
    <text evidence="1">Belongs to the Smg family.</text>
</comment>
<proteinExistence type="inferred from homology"/>
<dbReference type="EMBL" id="CP000305">
    <property type="protein sequence ID" value="ABG20152.1"/>
    <property type="molecule type" value="Genomic_DNA"/>
</dbReference>
<dbReference type="EMBL" id="ACNQ01000019">
    <property type="protein sequence ID" value="EEO74739.1"/>
    <property type="molecule type" value="Genomic_DNA"/>
</dbReference>
<dbReference type="RefSeq" id="WP_002209023.1">
    <property type="nucleotide sequence ID" value="NZ_ACNQ01000019.1"/>
</dbReference>
<dbReference type="SMR" id="Q1CCX8"/>
<dbReference type="KEGG" id="ypn:YPN_3825"/>
<dbReference type="HOGENOM" id="CLU_133242_0_0_6"/>
<dbReference type="Proteomes" id="UP000008936">
    <property type="component" value="Chromosome"/>
</dbReference>
<dbReference type="HAMAP" id="MF_00598">
    <property type="entry name" value="Smg"/>
    <property type="match status" value="1"/>
</dbReference>
<dbReference type="InterPro" id="IPR007456">
    <property type="entry name" value="Smg"/>
</dbReference>
<dbReference type="NCBIfam" id="NF002897">
    <property type="entry name" value="PRK03430.1"/>
    <property type="match status" value="1"/>
</dbReference>
<dbReference type="PANTHER" id="PTHR38692">
    <property type="entry name" value="PROTEIN SMG"/>
    <property type="match status" value="1"/>
</dbReference>
<dbReference type="PANTHER" id="PTHR38692:SF1">
    <property type="entry name" value="PROTEIN SMG"/>
    <property type="match status" value="1"/>
</dbReference>
<dbReference type="Pfam" id="PF04361">
    <property type="entry name" value="DUF494"/>
    <property type="match status" value="1"/>
</dbReference>
<sequence>MFDVLIYLFETYMHNEPEMLVDQDKITDDLADAGFYREDINNALNWLEVLADLQEGQKAPYLYTADPQALRIYTVEECRRLGAACRGFILFLEQIQVLQFDTREMVIDRIMALDSPEIDLEDLKWVVLMVLFNIPGYENAYKQMEELLFEVNDGYLH</sequence>
<organism>
    <name type="scientific">Yersinia pestis bv. Antiqua (strain Nepal516)</name>
    <dbReference type="NCBI Taxonomy" id="377628"/>
    <lineage>
        <taxon>Bacteria</taxon>
        <taxon>Pseudomonadati</taxon>
        <taxon>Pseudomonadota</taxon>
        <taxon>Gammaproteobacteria</taxon>
        <taxon>Enterobacterales</taxon>
        <taxon>Yersiniaceae</taxon>
        <taxon>Yersinia</taxon>
    </lineage>
</organism>
<name>SMG_YERPN</name>
<protein>
    <recommendedName>
        <fullName evidence="1">Protein Smg</fullName>
    </recommendedName>
</protein>
<evidence type="ECO:0000255" key="1">
    <source>
        <dbReference type="HAMAP-Rule" id="MF_00598"/>
    </source>
</evidence>
<gene>
    <name evidence="1" type="primary">smg</name>
    <name type="ordered locus">YPN_3825</name>
    <name type="ORF">YP516_4347</name>
</gene>
<reference key="1">
    <citation type="journal article" date="2006" name="J. Bacteriol.">
        <title>Complete genome sequence of Yersinia pestis strains Antiqua and Nepal516: evidence of gene reduction in an emerging pathogen.</title>
        <authorList>
            <person name="Chain P.S.G."/>
            <person name="Hu P."/>
            <person name="Malfatti S.A."/>
            <person name="Radnedge L."/>
            <person name="Larimer F."/>
            <person name="Vergez L.M."/>
            <person name="Worsham P."/>
            <person name="Chu M.C."/>
            <person name="Andersen G.L."/>
        </authorList>
    </citation>
    <scope>NUCLEOTIDE SEQUENCE [LARGE SCALE GENOMIC DNA]</scope>
    <source>
        <strain>Nepal516</strain>
    </source>
</reference>
<reference key="2">
    <citation type="submission" date="2009-04" db="EMBL/GenBank/DDBJ databases">
        <title>Yersinia pestis Nepal516A whole genome shotgun sequencing project.</title>
        <authorList>
            <person name="Plunkett G. III"/>
            <person name="Anderson B.D."/>
            <person name="Baumler D.J."/>
            <person name="Burland V."/>
            <person name="Cabot E.L."/>
            <person name="Glasner J.D."/>
            <person name="Mau B."/>
            <person name="Neeno-Eckwall E."/>
            <person name="Perna N.T."/>
            <person name="Munk A.C."/>
            <person name="Tapia R."/>
            <person name="Green L.D."/>
            <person name="Rogers Y.C."/>
            <person name="Detter J.C."/>
            <person name="Bruce D.C."/>
            <person name="Brettin T.S."/>
        </authorList>
    </citation>
    <scope>NUCLEOTIDE SEQUENCE [LARGE SCALE GENOMIC DNA]</scope>
    <source>
        <strain>Nepal516</strain>
    </source>
</reference>
<feature type="chain" id="PRO_1000025683" description="Protein Smg">
    <location>
        <begin position="1"/>
        <end position="157"/>
    </location>
</feature>